<organism>
    <name type="scientific">Pyrococcus horikoshii (strain ATCC 700860 / DSM 12428 / JCM 9974 / NBRC 100139 / OT-3)</name>
    <dbReference type="NCBI Taxonomy" id="70601"/>
    <lineage>
        <taxon>Archaea</taxon>
        <taxon>Methanobacteriati</taxon>
        <taxon>Methanobacteriota</taxon>
        <taxon>Thermococci</taxon>
        <taxon>Thermococcales</taxon>
        <taxon>Thermococcaceae</taxon>
        <taxon>Pyrococcus</taxon>
    </lineage>
</organism>
<sequence>MKVIMTTKVDKASMNIMNKLIENFGFKETEYVFDGNPVYKRGDVLILTTNDEMIYYDYLDREIENQLGFKPEIIAFASRHSSKQKLPALTTHVTGNWGKAMYGGKDESFAVAIPSAMKLSLLKMSELNDLGWTVCYEATHHGPTELEVPSFFIEIGSSEEEWINDRAGEIIAETIIYVLDNYEKGRSKFKVALGIGGGHYAPKQTKRALEGDLAFGHILPKYAQPVSRDVMIKALNRFGEKVEAIYVDWKGSRGETRQLAKSLAQELGLEFIKD</sequence>
<comment type="function">
    <text evidence="1">D-aminoacyl-tRNA deacylase with broad substrate specificity. By recycling D-aminoacyl-tRNA to D-amino acids and free tRNA molecules, this enzyme counteracts the toxicity associated with the formation of D-aminoacyl-tRNA entities in vivo.</text>
</comment>
<comment type="catalytic activity">
    <reaction evidence="1">
        <text>a D-aminoacyl-tRNA + H2O = a tRNA + a D-alpha-amino acid + H(+)</text>
        <dbReference type="Rhea" id="RHEA:13953"/>
        <dbReference type="Rhea" id="RHEA-COMP:10123"/>
        <dbReference type="Rhea" id="RHEA-COMP:10124"/>
        <dbReference type="ChEBI" id="CHEBI:15377"/>
        <dbReference type="ChEBI" id="CHEBI:15378"/>
        <dbReference type="ChEBI" id="CHEBI:59871"/>
        <dbReference type="ChEBI" id="CHEBI:78442"/>
        <dbReference type="ChEBI" id="CHEBI:79333"/>
        <dbReference type="EC" id="3.1.1.96"/>
    </reaction>
</comment>
<comment type="catalytic activity">
    <reaction evidence="1">
        <text>glycyl-tRNA(Ala) + H2O = tRNA(Ala) + glycine + H(+)</text>
        <dbReference type="Rhea" id="RHEA:53744"/>
        <dbReference type="Rhea" id="RHEA-COMP:9657"/>
        <dbReference type="Rhea" id="RHEA-COMP:13640"/>
        <dbReference type="ChEBI" id="CHEBI:15377"/>
        <dbReference type="ChEBI" id="CHEBI:15378"/>
        <dbReference type="ChEBI" id="CHEBI:57305"/>
        <dbReference type="ChEBI" id="CHEBI:78442"/>
        <dbReference type="ChEBI" id="CHEBI:78522"/>
        <dbReference type="EC" id="3.1.1.96"/>
    </reaction>
</comment>
<comment type="cofactor">
    <cofactor evidence="1">
        <name>Zn(2+)</name>
        <dbReference type="ChEBI" id="CHEBI:29105"/>
    </cofactor>
    <text evidence="1">Binds 2 Zn(2+) ions per subunit.</text>
</comment>
<comment type="subunit">
    <text evidence="1">Monomer.</text>
</comment>
<comment type="similarity">
    <text evidence="1">Belongs to the DtdA deacylase family.</text>
</comment>
<gene>
    <name evidence="1" type="primary">dtdA</name>
    <name type="ordered locus">PH0006</name>
</gene>
<reference key="1">
    <citation type="journal article" date="1998" name="DNA Res.">
        <title>Complete sequence and gene organization of the genome of a hyper-thermophilic archaebacterium, Pyrococcus horikoshii OT3.</title>
        <authorList>
            <person name="Kawarabayasi Y."/>
            <person name="Sawada M."/>
            <person name="Horikawa H."/>
            <person name="Haikawa Y."/>
            <person name="Hino Y."/>
            <person name="Yamamoto S."/>
            <person name="Sekine M."/>
            <person name="Baba S."/>
            <person name="Kosugi H."/>
            <person name="Hosoyama A."/>
            <person name="Nagai Y."/>
            <person name="Sakai M."/>
            <person name="Ogura K."/>
            <person name="Otsuka R."/>
            <person name="Nakazawa H."/>
            <person name="Takamiya M."/>
            <person name="Ohfuku Y."/>
            <person name="Funahashi T."/>
            <person name="Tanaka T."/>
            <person name="Kudoh Y."/>
            <person name="Yamazaki J."/>
            <person name="Kushida N."/>
            <person name="Oguchi A."/>
            <person name="Aoki K."/>
            <person name="Yoshizawa T."/>
            <person name="Nakamura Y."/>
            <person name="Robb F.T."/>
            <person name="Horikoshi K."/>
            <person name="Masuchi Y."/>
            <person name="Shizuya H."/>
            <person name="Kikuchi H."/>
        </authorList>
    </citation>
    <scope>NUCLEOTIDE SEQUENCE [LARGE SCALE GENOMIC DNA]</scope>
    <source>
        <strain>ATCC 700860 / DSM 12428 / JCM 9974 / NBRC 100139 / OT-3</strain>
    </source>
</reference>
<reference key="2">
    <citation type="submission" date="2006-04" db="PDB data bank">
        <title>Structure of hypothetical protein ph0006 from Pyrococcus horikoshii.</title>
        <authorList>
            <consortium name="Midwest center for structural genomics (MCSG)"/>
        </authorList>
    </citation>
    <scope>X-RAY CRYSTALLOGRAPHY (1.75 ANGSTROMS)</scope>
</reference>
<feature type="chain" id="PRO_0000158972" description="D-aminoacyl-tRNA deacylase">
    <location>
        <begin position="1"/>
        <end position="274"/>
    </location>
</feature>
<feature type="strand" evidence="2">
    <location>
        <begin position="2"/>
        <end position="7"/>
    </location>
</feature>
<feature type="helix" evidence="2">
    <location>
        <begin position="11"/>
        <end position="23"/>
    </location>
</feature>
<feature type="strand" evidence="2">
    <location>
        <begin position="27"/>
        <end position="33"/>
    </location>
</feature>
<feature type="strand" evidence="2">
    <location>
        <begin position="36"/>
        <end position="41"/>
    </location>
</feature>
<feature type="strand" evidence="2">
    <location>
        <begin position="44"/>
        <end position="51"/>
    </location>
</feature>
<feature type="helix" evidence="2">
    <location>
        <begin position="59"/>
        <end position="67"/>
    </location>
</feature>
<feature type="strand" evidence="2">
    <location>
        <begin position="72"/>
        <end position="81"/>
    </location>
</feature>
<feature type="strand" evidence="2">
    <location>
        <begin position="88"/>
        <end position="92"/>
    </location>
</feature>
<feature type="strand" evidence="2">
    <location>
        <begin position="95"/>
        <end position="98"/>
    </location>
</feature>
<feature type="strand" evidence="2">
    <location>
        <begin position="101"/>
        <end position="104"/>
    </location>
</feature>
<feature type="helix" evidence="2">
    <location>
        <begin position="114"/>
        <end position="127"/>
    </location>
</feature>
<feature type="strand" evidence="2">
    <location>
        <begin position="133"/>
        <end position="136"/>
    </location>
</feature>
<feature type="strand" evidence="2">
    <location>
        <begin position="148"/>
        <end position="158"/>
    </location>
</feature>
<feature type="helix" evidence="2">
    <location>
        <begin position="159"/>
        <end position="162"/>
    </location>
</feature>
<feature type="helix" evidence="2">
    <location>
        <begin position="165"/>
        <end position="185"/>
    </location>
</feature>
<feature type="turn" evidence="2">
    <location>
        <begin position="186"/>
        <end position="188"/>
    </location>
</feature>
<feature type="strand" evidence="2">
    <location>
        <begin position="190"/>
        <end position="195"/>
    </location>
</feature>
<feature type="helix" evidence="2">
    <location>
        <begin position="202"/>
        <end position="210"/>
    </location>
</feature>
<feature type="strand" evidence="2">
    <location>
        <begin position="211"/>
        <end position="219"/>
    </location>
</feature>
<feature type="helix" evidence="2">
    <location>
        <begin position="221"/>
        <end position="223"/>
    </location>
</feature>
<feature type="helix" evidence="2">
    <location>
        <begin position="228"/>
        <end position="235"/>
    </location>
</feature>
<feature type="strand" evidence="2">
    <location>
        <begin position="238"/>
        <end position="240"/>
    </location>
</feature>
<feature type="strand" evidence="2">
    <location>
        <begin position="244"/>
        <end position="249"/>
    </location>
</feature>
<feature type="helix" evidence="2">
    <location>
        <begin position="254"/>
        <end position="267"/>
    </location>
</feature>
<feature type="strand" evidence="2">
    <location>
        <begin position="270"/>
        <end position="274"/>
    </location>
</feature>
<proteinExistence type="evidence at protein level"/>
<protein>
    <recommendedName>
        <fullName evidence="1">D-aminoacyl-tRNA deacylase</fullName>
        <ecNumber evidence="1">3.1.1.96</ecNumber>
    </recommendedName>
    <alternativeName>
        <fullName>D-tyrosyl-tRNA(Tyr) deacylase</fullName>
    </alternativeName>
</protein>
<evidence type="ECO:0000255" key="1">
    <source>
        <dbReference type="HAMAP-Rule" id="MF_00562"/>
    </source>
</evidence>
<evidence type="ECO:0007829" key="2">
    <source>
        <dbReference type="PDB" id="2GFQ"/>
    </source>
</evidence>
<name>DTDA_PYRHO</name>
<dbReference type="EC" id="3.1.1.96" evidence="1"/>
<dbReference type="EMBL" id="BA000001">
    <property type="protein sequence ID" value="BAA29074.1"/>
    <property type="molecule type" value="Genomic_DNA"/>
</dbReference>
<dbReference type="PIR" id="C71218">
    <property type="entry name" value="C71218"/>
</dbReference>
<dbReference type="RefSeq" id="WP_010884126.1">
    <property type="nucleotide sequence ID" value="NC_000961.1"/>
</dbReference>
<dbReference type="PDB" id="2GFQ">
    <property type="method" value="X-ray"/>
    <property type="resolution" value="1.75 A"/>
    <property type="chains" value="A/B/C=1-274"/>
</dbReference>
<dbReference type="PDBsum" id="2GFQ"/>
<dbReference type="SMR" id="O57774"/>
<dbReference type="STRING" id="70601.gene:9376912"/>
<dbReference type="EnsemblBacteria" id="BAA29074">
    <property type="protein sequence ID" value="BAA29074"/>
    <property type="gene ID" value="BAA29074"/>
</dbReference>
<dbReference type="GeneID" id="1443908"/>
<dbReference type="KEGG" id="pho:PH0006"/>
<dbReference type="eggNOG" id="arCOG01616">
    <property type="taxonomic scope" value="Archaea"/>
</dbReference>
<dbReference type="OrthoDB" id="9863at2157"/>
<dbReference type="EvolutionaryTrace" id="O57774"/>
<dbReference type="Proteomes" id="UP000000752">
    <property type="component" value="Chromosome"/>
</dbReference>
<dbReference type="GO" id="GO:0051499">
    <property type="term" value="F:D-aminoacyl-tRNA deacylase activity"/>
    <property type="evidence" value="ECO:0007669"/>
    <property type="project" value="UniProtKB-UniRule"/>
</dbReference>
<dbReference type="GO" id="GO:0008270">
    <property type="term" value="F:zinc ion binding"/>
    <property type="evidence" value="ECO:0007669"/>
    <property type="project" value="UniProtKB-UniRule"/>
</dbReference>
<dbReference type="GO" id="GO:0019478">
    <property type="term" value="P:D-amino acid catabolic process"/>
    <property type="evidence" value="ECO:0007669"/>
    <property type="project" value="UniProtKB-UniRule"/>
</dbReference>
<dbReference type="FunFam" id="3.40.630.50:FF:000001">
    <property type="entry name" value="D-aminoacyl-tRNA deacylase"/>
    <property type="match status" value="1"/>
</dbReference>
<dbReference type="Gene3D" id="3.40.50.10700">
    <property type="entry name" value="AF0625-like"/>
    <property type="match status" value="1"/>
</dbReference>
<dbReference type="Gene3D" id="3.40.630.50">
    <property type="entry name" value="AF0625-like"/>
    <property type="match status" value="1"/>
</dbReference>
<dbReference type="HAMAP" id="MF_00562">
    <property type="entry name" value="Deacylase_DtdA"/>
    <property type="match status" value="1"/>
</dbReference>
<dbReference type="InterPro" id="IPR018033">
    <property type="entry name" value="Deacylase_DtdA_archaea"/>
</dbReference>
<dbReference type="InterPro" id="IPR007508">
    <property type="entry name" value="DtdA"/>
</dbReference>
<dbReference type="NCBIfam" id="NF003074">
    <property type="entry name" value="PRK03995.1-6"/>
    <property type="match status" value="1"/>
</dbReference>
<dbReference type="PANTHER" id="PTHR34667">
    <property type="entry name" value="D-AMINOACYL-TRNA DEACYLASE"/>
    <property type="match status" value="1"/>
</dbReference>
<dbReference type="PANTHER" id="PTHR34667:SF1">
    <property type="entry name" value="D-AMINOACYL-TRNA DEACYLASE"/>
    <property type="match status" value="1"/>
</dbReference>
<dbReference type="Pfam" id="PF04414">
    <property type="entry name" value="tRNA_deacylase"/>
    <property type="match status" value="1"/>
</dbReference>
<dbReference type="PIRSF" id="PIRSF016210">
    <property type="entry name" value="UCP016210"/>
    <property type="match status" value="1"/>
</dbReference>
<dbReference type="SUPFAM" id="SSF142535">
    <property type="entry name" value="AF0625-like"/>
    <property type="match status" value="1"/>
</dbReference>
<keyword id="KW-0002">3D-structure</keyword>
<keyword id="KW-0378">Hydrolase</keyword>
<keyword id="KW-0479">Metal-binding</keyword>
<keyword id="KW-0862">Zinc</keyword>
<accession>O57774</accession>